<protein>
    <recommendedName>
        <fullName evidence="1">Large ribosomal subunit protein uL10</fullName>
    </recommendedName>
    <alternativeName>
        <fullName evidence="2">50S ribosomal protein L10</fullName>
    </alternativeName>
</protein>
<sequence length="171" mass="17971">MANPRNEAALAELKARFAETDTVVLTEYRGLTVAQTTELRKALGFDVQYSVAKNTLVKIAANEAGIEGLDDLLTGPTAVAFIKGEAVDTAKVLKKFGEENKAFVVKGGYMDGNALTAEQVNAIAELDNRETTLAKLAGAMKGSLAKAAGLFNAPASQVARLAVALQDKKDA</sequence>
<gene>
    <name evidence="1" type="primary">rplJ</name>
    <name type="ordered locus">cgR_0588</name>
</gene>
<comment type="function">
    <text evidence="1">Forms part of the ribosomal stalk, playing a central role in the interaction of the ribosome with GTP-bound translation factors.</text>
</comment>
<comment type="subunit">
    <text evidence="1">Part of the ribosomal stalk of the 50S ribosomal subunit. The N-terminus interacts with L11 and the large rRNA to form the base of the stalk. The C-terminus forms an elongated spine to which L12 dimers bind in a sequential fashion forming a multimeric L10(L12)X complex.</text>
</comment>
<comment type="similarity">
    <text evidence="1">Belongs to the universal ribosomal protein uL10 family.</text>
</comment>
<reference key="1">
    <citation type="journal article" date="2007" name="Microbiology">
        <title>Comparative analysis of the Corynebacterium glutamicum group and complete genome sequence of strain R.</title>
        <authorList>
            <person name="Yukawa H."/>
            <person name="Omumasaba C.A."/>
            <person name="Nonaka H."/>
            <person name="Kos P."/>
            <person name="Okai N."/>
            <person name="Suzuki N."/>
            <person name="Suda M."/>
            <person name="Tsuge Y."/>
            <person name="Watanabe J."/>
            <person name="Ikeda Y."/>
            <person name="Vertes A.A."/>
            <person name="Inui M."/>
        </authorList>
    </citation>
    <scope>NUCLEOTIDE SEQUENCE [LARGE SCALE GENOMIC DNA]</scope>
    <source>
        <strain>R</strain>
    </source>
</reference>
<dbReference type="EMBL" id="AP009044">
    <property type="protein sequence ID" value="BAF53556.1"/>
    <property type="molecule type" value="Genomic_DNA"/>
</dbReference>
<dbReference type="RefSeq" id="WP_003854207.1">
    <property type="nucleotide sequence ID" value="NC_009342.1"/>
</dbReference>
<dbReference type="SMR" id="A4QBF9"/>
<dbReference type="KEGG" id="cgt:cgR_0588"/>
<dbReference type="HOGENOM" id="CLU_092227_1_0_11"/>
<dbReference type="PhylomeDB" id="A4QBF9"/>
<dbReference type="Proteomes" id="UP000006698">
    <property type="component" value="Chromosome"/>
</dbReference>
<dbReference type="GO" id="GO:1990904">
    <property type="term" value="C:ribonucleoprotein complex"/>
    <property type="evidence" value="ECO:0007669"/>
    <property type="project" value="UniProtKB-KW"/>
</dbReference>
<dbReference type="GO" id="GO:0005840">
    <property type="term" value="C:ribosome"/>
    <property type="evidence" value="ECO:0007669"/>
    <property type="project" value="UniProtKB-KW"/>
</dbReference>
<dbReference type="GO" id="GO:0070180">
    <property type="term" value="F:large ribosomal subunit rRNA binding"/>
    <property type="evidence" value="ECO:0007669"/>
    <property type="project" value="UniProtKB-UniRule"/>
</dbReference>
<dbReference type="GO" id="GO:0006412">
    <property type="term" value="P:translation"/>
    <property type="evidence" value="ECO:0007669"/>
    <property type="project" value="UniProtKB-UniRule"/>
</dbReference>
<dbReference type="CDD" id="cd05797">
    <property type="entry name" value="Ribosomal_L10"/>
    <property type="match status" value="1"/>
</dbReference>
<dbReference type="Gene3D" id="3.30.70.1730">
    <property type="match status" value="1"/>
</dbReference>
<dbReference type="HAMAP" id="MF_00362">
    <property type="entry name" value="Ribosomal_uL10"/>
    <property type="match status" value="1"/>
</dbReference>
<dbReference type="InterPro" id="IPR001790">
    <property type="entry name" value="Ribosomal_uL10"/>
</dbReference>
<dbReference type="InterPro" id="IPR043141">
    <property type="entry name" value="Ribosomal_uL10-like_sf"/>
</dbReference>
<dbReference type="InterPro" id="IPR022973">
    <property type="entry name" value="Ribosomal_uL10_bac"/>
</dbReference>
<dbReference type="InterPro" id="IPR047865">
    <property type="entry name" value="Ribosomal_uL10_bac_type"/>
</dbReference>
<dbReference type="NCBIfam" id="NF000955">
    <property type="entry name" value="PRK00099.1-1"/>
    <property type="match status" value="1"/>
</dbReference>
<dbReference type="PANTHER" id="PTHR11560">
    <property type="entry name" value="39S RIBOSOMAL PROTEIN L10, MITOCHONDRIAL"/>
    <property type="match status" value="1"/>
</dbReference>
<dbReference type="Pfam" id="PF00466">
    <property type="entry name" value="Ribosomal_L10"/>
    <property type="match status" value="1"/>
</dbReference>
<dbReference type="SUPFAM" id="SSF160369">
    <property type="entry name" value="Ribosomal protein L10-like"/>
    <property type="match status" value="1"/>
</dbReference>
<feature type="chain" id="PRO_1000005489" description="Large ribosomal subunit protein uL10">
    <location>
        <begin position="1"/>
        <end position="171"/>
    </location>
</feature>
<keyword id="KW-0687">Ribonucleoprotein</keyword>
<keyword id="KW-0689">Ribosomal protein</keyword>
<keyword id="KW-0694">RNA-binding</keyword>
<keyword id="KW-0699">rRNA-binding</keyword>
<name>RL10_CORGB</name>
<accession>A4QBF9</accession>
<proteinExistence type="inferred from homology"/>
<organism>
    <name type="scientific">Corynebacterium glutamicum (strain R)</name>
    <dbReference type="NCBI Taxonomy" id="340322"/>
    <lineage>
        <taxon>Bacteria</taxon>
        <taxon>Bacillati</taxon>
        <taxon>Actinomycetota</taxon>
        <taxon>Actinomycetes</taxon>
        <taxon>Mycobacteriales</taxon>
        <taxon>Corynebacteriaceae</taxon>
        <taxon>Corynebacterium</taxon>
    </lineage>
</organism>
<evidence type="ECO:0000255" key="1">
    <source>
        <dbReference type="HAMAP-Rule" id="MF_00362"/>
    </source>
</evidence>
<evidence type="ECO:0000305" key="2"/>